<evidence type="ECO:0000250" key="1"/>
<evidence type="ECO:0000255" key="2">
    <source>
        <dbReference type="HAMAP-Rule" id="MF_02116"/>
    </source>
</evidence>
<protein>
    <recommendedName>
        <fullName evidence="2">2-amino-5-formylamino-6-ribosylaminopyrimidin-4(3H)-one 5'-monophosphate deformylase</fullName>
        <shortName evidence="2">FAPy deformylase</shortName>
        <ecNumber evidence="2">3.5.1.102</ecNumber>
    </recommendedName>
    <alternativeName>
        <fullName evidence="2">Formamide hydrolase</fullName>
    </alternativeName>
</protein>
<reference key="1">
    <citation type="journal article" date="2004" name="J. Bacteriol.">
        <title>Complete genome sequence of the genetically tractable hydrogenotrophic methanogen Methanococcus maripaludis.</title>
        <authorList>
            <person name="Hendrickson E.L."/>
            <person name="Kaul R."/>
            <person name="Zhou Y."/>
            <person name="Bovee D."/>
            <person name="Chapman P."/>
            <person name="Chung J."/>
            <person name="Conway de Macario E."/>
            <person name="Dodsworth J.A."/>
            <person name="Gillett W."/>
            <person name="Graham D.E."/>
            <person name="Hackett M."/>
            <person name="Haydock A.K."/>
            <person name="Kang A."/>
            <person name="Land M.L."/>
            <person name="Levy R."/>
            <person name="Lie T.J."/>
            <person name="Major T.A."/>
            <person name="Moore B.C."/>
            <person name="Porat I."/>
            <person name="Palmeiri A."/>
            <person name="Rouse G."/>
            <person name="Saenphimmachak C."/>
            <person name="Soell D."/>
            <person name="Van Dien S."/>
            <person name="Wang T."/>
            <person name="Whitman W.B."/>
            <person name="Xia Q."/>
            <person name="Zhang Y."/>
            <person name="Larimer F.W."/>
            <person name="Olson M.V."/>
            <person name="Leigh J.A."/>
        </authorList>
    </citation>
    <scope>NUCLEOTIDE SEQUENCE [LARGE SCALE GENOMIC DNA]</scope>
    <source>
        <strain>DSM 14266 / JCM 13030 / NBRC 101832 / S2 / LL</strain>
    </source>
</reference>
<accession>Q6LWK4</accession>
<comment type="function">
    <text evidence="2">Catalyzes the hydrolysis of the formamide of 2-amino-5-formylamino-6-ribosylamino-4(3H)-pyrimidinone 5'-monophosphate (FAPy) to form 2,5-diamino-6-ribosylamino-4(3H)-pyrimidinone 5'-phosphate (APy).</text>
</comment>
<comment type="catalytic activity">
    <reaction evidence="2">
        <text>2-amino-5-formylamino-6-(5-phospho-D-ribosylamino)pyrimidin-4(3H)-one + H2O = 2,5-diamino-6-(1-D-ribosylamino)pyrimidin-4(3H)-one 5'-phosphate + formate + H(+)</text>
        <dbReference type="Rhea" id="RHEA:27282"/>
        <dbReference type="ChEBI" id="CHEBI:15377"/>
        <dbReference type="ChEBI" id="CHEBI:15378"/>
        <dbReference type="ChEBI" id="CHEBI:15740"/>
        <dbReference type="ChEBI" id="CHEBI:57258"/>
        <dbReference type="ChEBI" id="CHEBI:59545"/>
        <dbReference type="EC" id="3.5.1.102"/>
    </reaction>
</comment>
<comment type="cofactor">
    <cofactor evidence="1">
        <name>Fe(2+)</name>
        <dbReference type="ChEBI" id="CHEBI:29033"/>
    </cofactor>
    <text evidence="1">Requires one Fe(2+) ion for activity.</text>
</comment>
<comment type="cofactor">
    <cofactor evidence="1">
        <name>Fe(2+)</name>
        <dbReference type="ChEBI" id="CHEBI:29033"/>
    </cofactor>
    <cofactor evidence="1">
        <name>Zn(2+)</name>
        <dbReference type="ChEBI" id="CHEBI:29105"/>
    </cofactor>
    <text evidence="1">Requires an additional second metal ion that could be Fe(2+) or Zn(2+).</text>
</comment>
<comment type="pathway">
    <text evidence="2">Cofactor biosynthesis; coenzyme F420 biosynthesis.</text>
</comment>
<comment type="pathway">
    <text evidence="2">Cofactor biosynthesis; riboflavin biosynthesis.</text>
</comment>
<comment type="subunit">
    <text evidence="2">Homodimer.</text>
</comment>
<comment type="similarity">
    <text evidence="2">Belongs to the creatininase superfamily. FAPy deformylase family.</text>
</comment>
<name>ARFB_METMP</name>
<dbReference type="EC" id="3.5.1.102" evidence="2"/>
<dbReference type="EMBL" id="BX950229">
    <property type="protein sequence ID" value="CAF31261.1"/>
    <property type="molecule type" value="Genomic_DNA"/>
</dbReference>
<dbReference type="RefSeq" id="WP_011171649.1">
    <property type="nucleotide sequence ID" value="NC_005791.1"/>
</dbReference>
<dbReference type="SMR" id="Q6LWK4"/>
<dbReference type="STRING" id="267377.MMP1705"/>
<dbReference type="EnsemblBacteria" id="CAF31261">
    <property type="protein sequence ID" value="CAF31261"/>
    <property type="gene ID" value="MMP1705"/>
</dbReference>
<dbReference type="GeneID" id="2762448"/>
<dbReference type="KEGG" id="mmp:MMP1705"/>
<dbReference type="PATRIC" id="fig|267377.15.peg.1748"/>
<dbReference type="eggNOG" id="arCOG04536">
    <property type="taxonomic scope" value="Archaea"/>
</dbReference>
<dbReference type="HOGENOM" id="CLU_1192640_0_0_2"/>
<dbReference type="OrthoDB" id="46121at2157"/>
<dbReference type="UniPathway" id="UPA00071"/>
<dbReference type="UniPathway" id="UPA00275"/>
<dbReference type="Proteomes" id="UP000000590">
    <property type="component" value="Chromosome"/>
</dbReference>
<dbReference type="GO" id="GO:0043729">
    <property type="term" value="F:2-amino-5-formylamino-6-(5-phosphoribosylamino)pyrimidin-4(3H)-one formate-lyase activity"/>
    <property type="evidence" value="ECO:0007669"/>
    <property type="project" value="UniProtKB-EC"/>
</dbReference>
<dbReference type="GO" id="GO:0008198">
    <property type="term" value="F:ferrous iron binding"/>
    <property type="evidence" value="ECO:0007669"/>
    <property type="project" value="UniProtKB-UniRule"/>
</dbReference>
<dbReference type="GO" id="GO:0052645">
    <property type="term" value="P:F420-0 metabolic process"/>
    <property type="evidence" value="ECO:0007669"/>
    <property type="project" value="UniProtKB-UniRule"/>
</dbReference>
<dbReference type="GO" id="GO:0009231">
    <property type="term" value="P:riboflavin biosynthetic process"/>
    <property type="evidence" value="ECO:0007669"/>
    <property type="project" value="UniProtKB-UniRule"/>
</dbReference>
<dbReference type="Gene3D" id="3.40.50.10310">
    <property type="entry name" value="Creatininase"/>
    <property type="match status" value="1"/>
</dbReference>
<dbReference type="HAMAP" id="MF_02116">
    <property type="entry name" value="FAPy_deform"/>
    <property type="match status" value="1"/>
</dbReference>
<dbReference type="InterPro" id="IPR024087">
    <property type="entry name" value="Creatininase-like_sf"/>
</dbReference>
<dbReference type="InterPro" id="IPR003785">
    <property type="entry name" value="Creatininase/forma_Hydrolase"/>
</dbReference>
<dbReference type="InterPro" id="IPR024901">
    <property type="entry name" value="FAPy_deformylase"/>
</dbReference>
<dbReference type="NCBIfam" id="NF033501">
    <property type="entry name" value="ArfB_arch_rifla"/>
    <property type="match status" value="1"/>
</dbReference>
<dbReference type="PANTHER" id="PTHR35005:SF1">
    <property type="entry name" value="2-AMINO-5-FORMYLAMINO-6-RIBOSYLAMINOPYRIMIDIN-4(3H)-ONE 5'-MONOPHOSPHATE DEFORMYLASE"/>
    <property type="match status" value="1"/>
</dbReference>
<dbReference type="PANTHER" id="PTHR35005">
    <property type="entry name" value="3-DEHYDRO-SCYLLO-INOSOSE HYDROLASE"/>
    <property type="match status" value="1"/>
</dbReference>
<dbReference type="Pfam" id="PF02633">
    <property type="entry name" value="Creatininase"/>
    <property type="match status" value="1"/>
</dbReference>
<dbReference type="SUPFAM" id="SSF102215">
    <property type="entry name" value="Creatininase"/>
    <property type="match status" value="1"/>
</dbReference>
<organism>
    <name type="scientific">Methanococcus maripaludis (strain DSM 14266 / JCM 13030 / NBRC 101832 / S2 / LL)</name>
    <dbReference type="NCBI Taxonomy" id="267377"/>
    <lineage>
        <taxon>Archaea</taxon>
        <taxon>Methanobacteriati</taxon>
        <taxon>Methanobacteriota</taxon>
        <taxon>Methanomada group</taxon>
        <taxon>Methanococci</taxon>
        <taxon>Methanococcales</taxon>
        <taxon>Methanococcaceae</taxon>
        <taxon>Methanococcus</taxon>
    </lineage>
</organism>
<keyword id="KW-0378">Hydrolase</keyword>
<keyword id="KW-0408">Iron</keyword>
<keyword id="KW-0479">Metal-binding</keyword>
<keyword id="KW-1185">Reference proteome</keyword>
<keyword id="KW-0862">Zinc</keyword>
<proteinExistence type="inferred from homology"/>
<feature type="chain" id="PRO_0000406925" description="2-amino-5-formylamino-6-ribosylaminopyrimidin-4(3H)-one 5'-monophosphate deformylase">
    <location>
        <begin position="1"/>
        <end position="221"/>
    </location>
</feature>
<feature type="binding site" evidence="2">
    <location>
        <position position="29"/>
    </location>
    <ligand>
        <name>Fe cation</name>
        <dbReference type="ChEBI" id="CHEBI:24875"/>
        <label>1</label>
    </ligand>
</feature>
<feature type="binding site" evidence="2">
    <location>
        <position position="31"/>
    </location>
    <ligand>
        <name>Fe cation</name>
        <dbReference type="ChEBI" id="CHEBI:24875"/>
        <label>2</label>
    </ligand>
</feature>
<feature type="binding site" evidence="2">
    <location>
        <position position="40"/>
    </location>
    <ligand>
        <name>Fe cation</name>
        <dbReference type="ChEBI" id="CHEBI:24875"/>
        <label>1</label>
    </ligand>
</feature>
<feature type="binding site" evidence="2">
    <location>
        <position position="40"/>
    </location>
    <ligand>
        <name>Fe cation</name>
        <dbReference type="ChEBI" id="CHEBI:24875"/>
        <label>2</label>
    </ligand>
</feature>
<feature type="binding site" evidence="2">
    <location>
        <position position="108"/>
    </location>
    <ligand>
        <name>Fe cation</name>
        <dbReference type="ChEBI" id="CHEBI:24875"/>
        <label>1</label>
    </ligand>
</feature>
<gene>
    <name evidence="2" type="primary">arfB</name>
    <name type="ordered locus">MMP1705</name>
</gene>
<sequence>MIDLRYSSGNIFSESVHEIGIIALGSFLENHGSALPIDTDAKIASYIALNVSIITGAKFLGIVLPSTEYSYVKHGIHDSIEDVINYIKYLVENGRKIGIKKFLIINCHGGNTIIEDELLKLNSKDCFITMNSVCLTHASTEEVSLGYAVGILSEDKMKDHDPKVYGEIGMVGLTEAREKNEAIDLEAKSVEENGVFLDKVNGKSLLNDLINNYVEIVKNMI</sequence>